<feature type="chain" id="PRO_1000119197" description="Aminomethyltransferase">
    <location>
        <begin position="1"/>
        <end position="364"/>
    </location>
</feature>
<protein>
    <recommendedName>
        <fullName evidence="1">Aminomethyltransferase</fullName>
        <ecNumber evidence="1">2.1.2.10</ecNumber>
    </recommendedName>
    <alternativeName>
        <fullName evidence="1">Glycine cleavage system T protein</fullName>
    </alternativeName>
</protein>
<accession>B7MM91</accession>
<reference key="1">
    <citation type="journal article" date="2009" name="PLoS Genet.">
        <title>Organised genome dynamics in the Escherichia coli species results in highly diverse adaptive paths.</title>
        <authorList>
            <person name="Touchon M."/>
            <person name="Hoede C."/>
            <person name="Tenaillon O."/>
            <person name="Barbe V."/>
            <person name="Baeriswyl S."/>
            <person name="Bidet P."/>
            <person name="Bingen E."/>
            <person name="Bonacorsi S."/>
            <person name="Bouchier C."/>
            <person name="Bouvet O."/>
            <person name="Calteau A."/>
            <person name="Chiapello H."/>
            <person name="Clermont O."/>
            <person name="Cruveiller S."/>
            <person name="Danchin A."/>
            <person name="Diard M."/>
            <person name="Dossat C."/>
            <person name="Karoui M.E."/>
            <person name="Frapy E."/>
            <person name="Garry L."/>
            <person name="Ghigo J.M."/>
            <person name="Gilles A.M."/>
            <person name="Johnson J."/>
            <person name="Le Bouguenec C."/>
            <person name="Lescat M."/>
            <person name="Mangenot S."/>
            <person name="Martinez-Jehanne V."/>
            <person name="Matic I."/>
            <person name="Nassif X."/>
            <person name="Oztas S."/>
            <person name="Petit M.A."/>
            <person name="Pichon C."/>
            <person name="Rouy Z."/>
            <person name="Ruf C.S."/>
            <person name="Schneider D."/>
            <person name="Tourret J."/>
            <person name="Vacherie B."/>
            <person name="Vallenet D."/>
            <person name="Medigue C."/>
            <person name="Rocha E.P.C."/>
            <person name="Denamur E."/>
        </authorList>
    </citation>
    <scope>NUCLEOTIDE SEQUENCE [LARGE SCALE GENOMIC DNA]</scope>
    <source>
        <strain>S88 / ExPEC</strain>
    </source>
</reference>
<dbReference type="EC" id="2.1.2.10" evidence="1"/>
<dbReference type="EMBL" id="CU928161">
    <property type="protein sequence ID" value="CAR04420.1"/>
    <property type="molecule type" value="Genomic_DNA"/>
</dbReference>
<dbReference type="RefSeq" id="WP_000068706.1">
    <property type="nucleotide sequence ID" value="NC_011742.1"/>
</dbReference>
<dbReference type="SMR" id="B7MM91"/>
<dbReference type="GeneID" id="75173005"/>
<dbReference type="KEGG" id="ecz:ECS88_3184"/>
<dbReference type="HOGENOM" id="CLU_007884_10_2_6"/>
<dbReference type="Proteomes" id="UP000000747">
    <property type="component" value="Chromosome"/>
</dbReference>
<dbReference type="GO" id="GO:0005829">
    <property type="term" value="C:cytosol"/>
    <property type="evidence" value="ECO:0007669"/>
    <property type="project" value="TreeGrafter"/>
</dbReference>
<dbReference type="GO" id="GO:0005960">
    <property type="term" value="C:glycine cleavage complex"/>
    <property type="evidence" value="ECO:0007669"/>
    <property type="project" value="InterPro"/>
</dbReference>
<dbReference type="GO" id="GO:0004047">
    <property type="term" value="F:aminomethyltransferase activity"/>
    <property type="evidence" value="ECO:0007669"/>
    <property type="project" value="UniProtKB-UniRule"/>
</dbReference>
<dbReference type="GO" id="GO:0008483">
    <property type="term" value="F:transaminase activity"/>
    <property type="evidence" value="ECO:0007669"/>
    <property type="project" value="UniProtKB-KW"/>
</dbReference>
<dbReference type="GO" id="GO:0019464">
    <property type="term" value="P:glycine decarboxylation via glycine cleavage system"/>
    <property type="evidence" value="ECO:0007669"/>
    <property type="project" value="UniProtKB-UniRule"/>
</dbReference>
<dbReference type="FunFam" id="2.40.30.110:FF:000001">
    <property type="entry name" value="Aminomethyltransferase"/>
    <property type="match status" value="1"/>
</dbReference>
<dbReference type="FunFam" id="3.30.70.1400:FF:000001">
    <property type="entry name" value="Aminomethyltransferase"/>
    <property type="match status" value="1"/>
</dbReference>
<dbReference type="FunFam" id="4.10.1250.10:FF:000001">
    <property type="entry name" value="Aminomethyltransferase"/>
    <property type="match status" value="1"/>
</dbReference>
<dbReference type="Gene3D" id="2.40.30.110">
    <property type="entry name" value="Aminomethyltransferase beta-barrel domains"/>
    <property type="match status" value="1"/>
</dbReference>
<dbReference type="Gene3D" id="3.30.70.1400">
    <property type="entry name" value="Aminomethyltransferase beta-barrel domains"/>
    <property type="match status" value="1"/>
</dbReference>
<dbReference type="Gene3D" id="4.10.1250.10">
    <property type="entry name" value="Aminomethyltransferase fragment"/>
    <property type="match status" value="1"/>
</dbReference>
<dbReference type="Gene3D" id="3.30.1360.120">
    <property type="entry name" value="Probable tRNA modification gtpase trme, domain 1"/>
    <property type="match status" value="1"/>
</dbReference>
<dbReference type="HAMAP" id="MF_00259">
    <property type="entry name" value="GcvT"/>
    <property type="match status" value="1"/>
</dbReference>
<dbReference type="InterPro" id="IPR006223">
    <property type="entry name" value="GCS_T"/>
</dbReference>
<dbReference type="InterPro" id="IPR022903">
    <property type="entry name" value="GCS_T_bac"/>
</dbReference>
<dbReference type="InterPro" id="IPR013977">
    <property type="entry name" value="GCST_C"/>
</dbReference>
<dbReference type="InterPro" id="IPR006222">
    <property type="entry name" value="GCV_T_N"/>
</dbReference>
<dbReference type="InterPro" id="IPR028896">
    <property type="entry name" value="GcvT/YgfZ/DmdA"/>
</dbReference>
<dbReference type="InterPro" id="IPR029043">
    <property type="entry name" value="GcvT/YgfZ_C"/>
</dbReference>
<dbReference type="InterPro" id="IPR027266">
    <property type="entry name" value="TrmE/GcvT_dom1"/>
</dbReference>
<dbReference type="NCBIfam" id="TIGR00528">
    <property type="entry name" value="gcvT"/>
    <property type="match status" value="1"/>
</dbReference>
<dbReference type="NCBIfam" id="NF001567">
    <property type="entry name" value="PRK00389.1"/>
    <property type="match status" value="1"/>
</dbReference>
<dbReference type="PANTHER" id="PTHR43757">
    <property type="entry name" value="AMINOMETHYLTRANSFERASE"/>
    <property type="match status" value="1"/>
</dbReference>
<dbReference type="PANTHER" id="PTHR43757:SF2">
    <property type="entry name" value="AMINOMETHYLTRANSFERASE, MITOCHONDRIAL"/>
    <property type="match status" value="1"/>
</dbReference>
<dbReference type="Pfam" id="PF01571">
    <property type="entry name" value="GCV_T"/>
    <property type="match status" value="1"/>
</dbReference>
<dbReference type="Pfam" id="PF08669">
    <property type="entry name" value="GCV_T_C"/>
    <property type="match status" value="1"/>
</dbReference>
<dbReference type="PIRSF" id="PIRSF006487">
    <property type="entry name" value="GcvT"/>
    <property type="match status" value="1"/>
</dbReference>
<dbReference type="SUPFAM" id="SSF101790">
    <property type="entry name" value="Aminomethyltransferase beta-barrel domain"/>
    <property type="match status" value="1"/>
</dbReference>
<dbReference type="SUPFAM" id="SSF103025">
    <property type="entry name" value="Folate-binding domain"/>
    <property type="match status" value="1"/>
</dbReference>
<comment type="function">
    <text evidence="1">The glycine cleavage system catalyzes the degradation of glycine.</text>
</comment>
<comment type="catalytic activity">
    <reaction evidence="1">
        <text>N(6)-[(R)-S(8)-aminomethyldihydrolipoyl]-L-lysyl-[protein] + (6S)-5,6,7,8-tetrahydrofolate = N(6)-[(R)-dihydrolipoyl]-L-lysyl-[protein] + (6R)-5,10-methylene-5,6,7,8-tetrahydrofolate + NH4(+)</text>
        <dbReference type="Rhea" id="RHEA:16945"/>
        <dbReference type="Rhea" id="RHEA-COMP:10475"/>
        <dbReference type="Rhea" id="RHEA-COMP:10492"/>
        <dbReference type="ChEBI" id="CHEBI:15636"/>
        <dbReference type="ChEBI" id="CHEBI:28938"/>
        <dbReference type="ChEBI" id="CHEBI:57453"/>
        <dbReference type="ChEBI" id="CHEBI:83100"/>
        <dbReference type="ChEBI" id="CHEBI:83143"/>
        <dbReference type="EC" id="2.1.2.10"/>
    </reaction>
</comment>
<comment type="subunit">
    <text evidence="1">The glycine cleavage system is composed of four proteins: P, T, L and H.</text>
</comment>
<comment type="similarity">
    <text evidence="1">Belongs to the GcvT family.</text>
</comment>
<keyword id="KW-0032">Aminotransferase</keyword>
<keyword id="KW-1185">Reference proteome</keyword>
<keyword id="KW-0808">Transferase</keyword>
<proteinExistence type="inferred from homology"/>
<organism>
    <name type="scientific">Escherichia coli O45:K1 (strain S88 / ExPEC)</name>
    <dbReference type="NCBI Taxonomy" id="585035"/>
    <lineage>
        <taxon>Bacteria</taxon>
        <taxon>Pseudomonadati</taxon>
        <taxon>Pseudomonadota</taxon>
        <taxon>Gammaproteobacteria</taxon>
        <taxon>Enterobacterales</taxon>
        <taxon>Enterobacteriaceae</taxon>
        <taxon>Escherichia</taxon>
    </lineage>
</organism>
<name>GCST_ECO45</name>
<sequence>MAQQTPLYEQHTLCGARMVDFHGWMMPLHYGSQIDEHHAVRTDAGMFDVSHMTIVDLRGSRTREFLRYLLANDVAKLTKSGKALYSGMLNASGGVIDDLIVYYFTEDFFRLVVNSATREKDLSWITQHAEPFGIEITVRDDLSMIAVQGPNAQAKAATLFNDAQRQAVEGMKPFFGVQAGDLFIATTGYTGEAGYEIALPNEKAADFWRALVEAGVKPCGLGARDTLRLEAGMNLYSQEMDETISPLAANMGWTIAWEPADRDFIGREALEAQREHGTEKLVGLVMTEKGVLRNELPVRFTDAQGNQHEGIITSGTFSPTLGYSIALARVPEGIGETAIVQIRNREMPVKVTKPVFVRNGKAVA</sequence>
<gene>
    <name evidence="1" type="primary">gcvT</name>
    <name type="ordered locus">ECS88_3184</name>
</gene>
<evidence type="ECO:0000255" key="1">
    <source>
        <dbReference type="HAMAP-Rule" id="MF_00259"/>
    </source>
</evidence>